<protein>
    <recommendedName>
        <fullName>Probable secreted beta-glucosidase C2G2.17c</fullName>
        <ecNumber>3.2.1.-</ecNumber>
    </recommendedName>
</protein>
<evidence type="ECO:0000250" key="1"/>
<evidence type="ECO:0000255" key="2"/>
<evidence type="ECO:0000305" key="3"/>
<proteinExistence type="inferred from homology"/>
<reference key="1">
    <citation type="journal article" date="2002" name="Nature">
        <title>The genome sequence of Schizosaccharomyces pombe.</title>
        <authorList>
            <person name="Wood V."/>
            <person name="Gwilliam R."/>
            <person name="Rajandream M.A."/>
            <person name="Lyne M.H."/>
            <person name="Lyne R."/>
            <person name="Stewart A."/>
            <person name="Sgouros J.G."/>
            <person name="Peat N."/>
            <person name="Hayles J."/>
            <person name="Baker S.G."/>
            <person name="Basham D."/>
            <person name="Bowman S."/>
            <person name="Brooks K."/>
            <person name="Brown D."/>
            <person name="Brown S."/>
            <person name="Chillingworth T."/>
            <person name="Churcher C.M."/>
            <person name="Collins M."/>
            <person name="Connor R."/>
            <person name="Cronin A."/>
            <person name="Davis P."/>
            <person name="Feltwell T."/>
            <person name="Fraser A."/>
            <person name="Gentles S."/>
            <person name="Goble A."/>
            <person name="Hamlin N."/>
            <person name="Harris D.E."/>
            <person name="Hidalgo J."/>
            <person name="Hodgson G."/>
            <person name="Holroyd S."/>
            <person name="Hornsby T."/>
            <person name="Howarth S."/>
            <person name="Huckle E.J."/>
            <person name="Hunt S."/>
            <person name="Jagels K."/>
            <person name="James K.D."/>
            <person name="Jones L."/>
            <person name="Jones M."/>
            <person name="Leather S."/>
            <person name="McDonald S."/>
            <person name="McLean J."/>
            <person name="Mooney P."/>
            <person name="Moule S."/>
            <person name="Mungall K.L."/>
            <person name="Murphy L.D."/>
            <person name="Niblett D."/>
            <person name="Odell C."/>
            <person name="Oliver K."/>
            <person name="O'Neil S."/>
            <person name="Pearson D."/>
            <person name="Quail M.A."/>
            <person name="Rabbinowitsch E."/>
            <person name="Rutherford K.M."/>
            <person name="Rutter S."/>
            <person name="Saunders D."/>
            <person name="Seeger K."/>
            <person name="Sharp S."/>
            <person name="Skelton J."/>
            <person name="Simmonds M.N."/>
            <person name="Squares R."/>
            <person name="Squares S."/>
            <person name="Stevens K."/>
            <person name="Taylor K."/>
            <person name="Taylor R.G."/>
            <person name="Tivey A."/>
            <person name="Walsh S.V."/>
            <person name="Warren T."/>
            <person name="Whitehead S."/>
            <person name="Woodward J.R."/>
            <person name="Volckaert G."/>
            <person name="Aert R."/>
            <person name="Robben J."/>
            <person name="Grymonprez B."/>
            <person name="Weltjens I."/>
            <person name="Vanstreels E."/>
            <person name="Rieger M."/>
            <person name="Schaefer M."/>
            <person name="Mueller-Auer S."/>
            <person name="Gabel C."/>
            <person name="Fuchs M."/>
            <person name="Duesterhoeft A."/>
            <person name="Fritzc C."/>
            <person name="Holzer E."/>
            <person name="Moestl D."/>
            <person name="Hilbert H."/>
            <person name="Borzym K."/>
            <person name="Langer I."/>
            <person name="Beck A."/>
            <person name="Lehrach H."/>
            <person name="Reinhardt R."/>
            <person name="Pohl T.M."/>
            <person name="Eger P."/>
            <person name="Zimmermann W."/>
            <person name="Wedler H."/>
            <person name="Wambutt R."/>
            <person name="Purnelle B."/>
            <person name="Goffeau A."/>
            <person name="Cadieu E."/>
            <person name="Dreano S."/>
            <person name="Gloux S."/>
            <person name="Lelaure V."/>
            <person name="Mottier S."/>
            <person name="Galibert F."/>
            <person name="Aves S.J."/>
            <person name="Xiang Z."/>
            <person name="Hunt C."/>
            <person name="Moore K."/>
            <person name="Hurst S.M."/>
            <person name="Lucas M."/>
            <person name="Rochet M."/>
            <person name="Gaillardin C."/>
            <person name="Tallada V.A."/>
            <person name="Garzon A."/>
            <person name="Thode G."/>
            <person name="Daga R.R."/>
            <person name="Cruzado L."/>
            <person name="Jimenez J."/>
            <person name="Sanchez M."/>
            <person name="del Rey F."/>
            <person name="Benito J."/>
            <person name="Dominguez A."/>
            <person name="Revuelta J.L."/>
            <person name="Moreno S."/>
            <person name="Armstrong J."/>
            <person name="Forsburg S.L."/>
            <person name="Cerutti L."/>
            <person name="Lowe T."/>
            <person name="McCombie W.R."/>
            <person name="Paulsen I."/>
            <person name="Potashkin J."/>
            <person name="Shpakovski G.V."/>
            <person name="Ussery D."/>
            <person name="Barrell B.G."/>
            <person name="Nurse P."/>
        </authorList>
    </citation>
    <scope>NUCLEOTIDE SEQUENCE [LARGE SCALE GENOMIC DNA]</scope>
    <source>
        <strain>972 / ATCC 24843</strain>
    </source>
</reference>
<organism>
    <name type="scientific">Schizosaccharomyces pombe (strain 972 / ATCC 24843)</name>
    <name type="common">Fission yeast</name>
    <dbReference type="NCBI Taxonomy" id="284812"/>
    <lineage>
        <taxon>Eukaryota</taxon>
        <taxon>Fungi</taxon>
        <taxon>Dikarya</taxon>
        <taxon>Ascomycota</taxon>
        <taxon>Taphrinomycotina</taxon>
        <taxon>Schizosaccharomycetes</taxon>
        <taxon>Schizosaccharomycetales</taxon>
        <taxon>Schizosaccharomycetaceae</taxon>
        <taxon>Schizosaccharomyces</taxon>
    </lineage>
</organism>
<feature type="signal peptide" evidence="2">
    <location>
        <begin position="1"/>
        <end position="19"/>
    </location>
</feature>
<feature type="chain" id="PRO_0000310373" description="Probable secreted beta-glucosidase C2G2.17c">
    <location>
        <begin position="20"/>
        <end position="319"/>
    </location>
</feature>
<feature type="glycosylation site" description="N-linked (GlcNAc...) asparagine" evidence="2">
    <location>
        <position position="36"/>
    </location>
</feature>
<feature type="glycosylation site" description="N-linked (GlcNAc...) asparagine" evidence="2">
    <location>
        <position position="39"/>
    </location>
</feature>
<feature type="glycosylation site" description="N-linked (GlcNAc...) asparagine" evidence="2">
    <location>
        <position position="45"/>
    </location>
</feature>
<feature type="glycosylation site" description="N-linked (GlcNAc...) asparagine" evidence="2">
    <location>
        <position position="48"/>
    </location>
</feature>
<feature type="glycosylation site" description="N-linked (GlcNAc...) asparagine" evidence="2">
    <location>
        <position position="221"/>
    </location>
</feature>
<keyword id="KW-0119">Carbohydrate metabolism</keyword>
<keyword id="KW-0961">Cell wall biogenesis/degradation</keyword>
<keyword id="KW-0325">Glycoprotein</keyword>
<keyword id="KW-0326">Glycosidase</keyword>
<keyword id="KW-0378">Hydrolase</keyword>
<keyword id="KW-0624">Polysaccharide degradation</keyword>
<keyword id="KW-1185">Reference proteome</keyword>
<keyword id="KW-0964">Secreted</keyword>
<keyword id="KW-0732">Signal</keyword>
<accession>O43015</accession>
<gene>
    <name type="ORF">SPBC2G2.17c</name>
</gene>
<comment type="function">
    <text evidence="1">Cell surface beta-glucosidase involved in cell wall biogenesis.</text>
</comment>
<comment type="subcellular location">
    <subcellularLocation>
        <location evidence="3">Secreted</location>
    </subcellularLocation>
</comment>
<comment type="similarity">
    <text evidence="3">Belongs to the SUN family.</text>
</comment>
<name>YBOH_SCHPO</name>
<dbReference type="EC" id="3.2.1.-"/>
<dbReference type="EMBL" id="CU329671">
    <property type="protein sequence ID" value="CAA17897.1"/>
    <property type="molecule type" value="Genomic_DNA"/>
</dbReference>
<dbReference type="PIR" id="T40156">
    <property type="entry name" value="T40156"/>
</dbReference>
<dbReference type="BioGRID" id="276979">
    <property type="interactions" value="18"/>
</dbReference>
<dbReference type="FunCoup" id="O43015">
    <property type="interactions" value="11"/>
</dbReference>
<dbReference type="STRING" id="284812.O43015"/>
<dbReference type="CAZy" id="GH132">
    <property type="family name" value="Glycoside Hydrolase Family 132"/>
</dbReference>
<dbReference type="PaxDb" id="4896-SPBC2G2.17c.1"/>
<dbReference type="EnsemblFungi" id="SPBC2G2.17c.1">
    <property type="protein sequence ID" value="SPBC2G2.17c.1:pep"/>
    <property type="gene ID" value="SPBC2G2.17c"/>
</dbReference>
<dbReference type="KEGG" id="spo:2540451"/>
<dbReference type="PomBase" id="SPBC2G2.17c"/>
<dbReference type="VEuPathDB" id="FungiDB:SPBC2G2.17c"/>
<dbReference type="eggNOG" id="ENOG502QPVV">
    <property type="taxonomic scope" value="Eukaryota"/>
</dbReference>
<dbReference type="HOGENOM" id="CLU_033459_0_0_1"/>
<dbReference type="InParanoid" id="O43015"/>
<dbReference type="OMA" id="CIWGTEG"/>
<dbReference type="PhylomeDB" id="O43015"/>
<dbReference type="PRO" id="PR:O43015"/>
<dbReference type="Proteomes" id="UP000002485">
    <property type="component" value="Chromosome II"/>
</dbReference>
<dbReference type="GO" id="GO:0009986">
    <property type="term" value="C:cell surface"/>
    <property type="evidence" value="ECO:0000318"/>
    <property type="project" value="GO_Central"/>
</dbReference>
<dbReference type="GO" id="GO:0005576">
    <property type="term" value="C:extracellular region"/>
    <property type="evidence" value="ECO:0007669"/>
    <property type="project" value="UniProtKB-SubCell"/>
</dbReference>
<dbReference type="GO" id="GO:0009277">
    <property type="term" value="C:fungal-type cell wall"/>
    <property type="evidence" value="ECO:0000318"/>
    <property type="project" value="GO_Central"/>
</dbReference>
<dbReference type="GO" id="GO:0008422">
    <property type="term" value="F:beta-glucosidase activity"/>
    <property type="evidence" value="ECO:0000255"/>
    <property type="project" value="PomBase"/>
</dbReference>
<dbReference type="GO" id="GO:0031505">
    <property type="term" value="P:fungal-type cell wall organization"/>
    <property type="evidence" value="ECO:0000318"/>
    <property type="project" value="GO_Central"/>
</dbReference>
<dbReference type="GO" id="GO:0000272">
    <property type="term" value="P:polysaccharide catabolic process"/>
    <property type="evidence" value="ECO:0007669"/>
    <property type="project" value="UniProtKB-KW"/>
</dbReference>
<dbReference type="InterPro" id="IPR051526">
    <property type="entry name" value="Beta-Glucosidase_SUN"/>
</dbReference>
<dbReference type="InterPro" id="IPR005556">
    <property type="entry name" value="SUN"/>
</dbReference>
<dbReference type="PANTHER" id="PTHR31316">
    <property type="entry name" value="BETA-GLUCOSIDASE-LIKE PROTEIN NCA3, MITOCHONDRIAL-RELATED"/>
    <property type="match status" value="1"/>
</dbReference>
<dbReference type="PANTHER" id="PTHR31316:SF1">
    <property type="entry name" value="SECRETED BETA-GLUCOSIDASE C2G2.17C-RELATED"/>
    <property type="match status" value="1"/>
</dbReference>
<dbReference type="Pfam" id="PF03856">
    <property type="entry name" value="SUN"/>
    <property type="match status" value="1"/>
</dbReference>
<sequence length="319" mass="34350">MLFNNFLCFAVSAIPLVSAMPLGNAPYHHHHHAGLNASNITVGVNVTNTTAFSKRDGGFPDGVYDCSSFPDDQNGVVRLDYLGFGGWSGVQKNDGKYGTASTCQDNTYCSYACKPGMSKTQWPSEQPDNGVSVGGLYCKNGKLYLTQKDNSNLCEDGKGTAYVKNTLSSNVAICRTDYPGTENMNIPTNIDGGSKQPLSDVDEDSYYNWGGKKTSAQYYVNKSGRSAEDVCVWGNEGDDYGNWAPMNFGSGYTDGKTWLSMSFNPLSSAKLDYNIRIKSDGGSLSGDCYYEDGSFHGSTADSSGCTVSVTGGNAYFELY</sequence>